<sequence length="82" mass="9179">MVTIRLSRGGAKKRPFYQIVVADSRSPRDGRFIERVGFFNPIAQGNAERLRINLERVNHWVAQGASLSDRVASLVKEAQKAA</sequence>
<accession>P44382</accession>
<keyword id="KW-1185">Reference proteome</keyword>
<keyword id="KW-0687">Ribonucleoprotein</keyword>
<keyword id="KW-0689">Ribosomal protein</keyword>
<evidence type="ECO:0000255" key="1">
    <source>
        <dbReference type="HAMAP-Rule" id="MF_00385"/>
    </source>
</evidence>
<evidence type="ECO:0000305" key="2"/>
<comment type="similarity">
    <text evidence="1">Belongs to the bacterial ribosomal protein bS16 family.</text>
</comment>
<organism>
    <name type="scientific">Haemophilus influenzae (strain ATCC 51907 / DSM 11121 / KW20 / Rd)</name>
    <dbReference type="NCBI Taxonomy" id="71421"/>
    <lineage>
        <taxon>Bacteria</taxon>
        <taxon>Pseudomonadati</taxon>
        <taxon>Pseudomonadota</taxon>
        <taxon>Gammaproteobacteria</taxon>
        <taxon>Pasteurellales</taxon>
        <taxon>Pasteurellaceae</taxon>
        <taxon>Haemophilus</taxon>
    </lineage>
</organism>
<protein>
    <recommendedName>
        <fullName evidence="1">Small ribosomal subunit protein bS16</fullName>
    </recommendedName>
    <alternativeName>
        <fullName evidence="2">30S ribosomal protein S16</fullName>
    </alternativeName>
</protein>
<gene>
    <name evidence="1" type="primary">rpsP</name>
    <name evidence="1" type="synonym">rps16</name>
    <name type="ordered locus">HI_0204</name>
</gene>
<proteinExistence type="inferred from homology"/>
<name>RS16_HAEIN</name>
<feature type="chain" id="PRO_0000167192" description="Small ribosomal subunit protein bS16">
    <location>
        <begin position="1"/>
        <end position="82"/>
    </location>
</feature>
<dbReference type="EMBL" id="L42023">
    <property type="protein sequence ID" value="AAC21873.1"/>
    <property type="molecule type" value="Genomic_DNA"/>
</dbReference>
<dbReference type="PIR" id="D64054">
    <property type="entry name" value="D64054"/>
</dbReference>
<dbReference type="RefSeq" id="NP_438373.1">
    <property type="nucleotide sequence ID" value="NC_000907.1"/>
</dbReference>
<dbReference type="SMR" id="P44382"/>
<dbReference type="STRING" id="71421.HI_0204"/>
<dbReference type="EnsemblBacteria" id="AAC21873">
    <property type="protein sequence ID" value="AAC21873"/>
    <property type="gene ID" value="HI_0204"/>
</dbReference>
<dbReference type="KEGG" id="hin:HI_0204"/>
<dbReference type="PATRIC" id="fig|71421.8.peg.209"/>
<dbReference type="eggNOG" id="COG0228">
    <property type="taxonomic scope" value="Bacteria"/>
</dbReference>
<dbReference type="HOGENOM" id="CLU_100590_5_1_6"/>
<dbReference type="OrthoDB" id="9807878at2"/>
<dbReference type="PhylomeDB" id="P44382"/>
<dbReference type="BioCyc" id="HINF71421:G1GJ1-215-MONOMER"/>
<dbReference type="Proteomes" id="UP000000579">
    <property type="component" value="Chromosome"/>
</dbReference>
<dbReference type="GO" id="GO:0005737">
    <property type="term" value="C:cytoplasm"/>
    <property type="evidence" value="ECO:0007669"/>
    <property type="project" value="UniProtKB-ARBA"/>
</dbReference>
<dbReference type="GO" id="GO:0015935">
    <property type="term" value="C:small ribosomal subunit"/>
    <property type="evidence" value="ECO:0000318"/>
    <property type="project" value="GO_Central"/>
</dbReference>
<dbReference type="GO" id="GO:0003735">
    <property type="term" value="F:structural constituent of ribosome"/>
    <property type="evidence" value="ECO:0000318"/>
    <property type="project" value="GO_Central"/>
</dbReference>
<dbReference type="GO" id="GO:0006412">
    <property type="term" value="P:translation"/>
    <property type="evidence" value="ECO:0007669"/>
    <property type="project" value="UniProtKB-UniRule"/>
</dbReference>
<dbReference type="FunFam" id="3.30.1320.10:FF:000001">
    <property type="entry name" value="30S ribosomal protein S16"/>
    <property type="match status" value="1"/>
</dbReference>
<dbReference type="Gene3D" id="3.30.1320.10">
    <property type="match status" value="1"/>
</dbReference>
<dbReference type="HAMAP" id="MF_00385">
    <property type="entry name" value="Ribosomal_bS16"/>
    <property type="match status" value="1"/>
</dbReference>
<dbReference type="InterPro" id="IPR000307">
    <property type="entry name" value="Ribosomal_bS16"/>
</dbReference>
<dbReference type="InterPro" id="IPR020592">
    <property type="entry name" value="Ribosomal_bS16_CS"/>
</dbReference>
<dbReference type="InterPro" id="IPR023803">
    <property type="entry name" value="Ribosomal_bS16_dom_sf"/>
</dbReference>
<dbReference type="NCBIfam" id="TIGR00002">
    <property type="entry name" value="S16"/>
    <property type="match status" value="1"/>
</dbReference>
<dbReference type="PANTHER" id="PTHR12919">
    <property type="entry name" value="30S RIBOSOMAL PROTEIN S16"/>
    <property type="match status" value="1"/>
</dbReference>
<dbReference type="PANTHER" id="PTHR12919:SF20">
    <property type="entry name" value="SMALL RIBOSOMAL SUBUNIT PROTEIN BS16M"/>
    <property type="match status" value="1"/>
</dbReference>
<dbReference type="Pfam" id="PF00886">
    <property type="entry name" value="Ribosomal_S16"/>
    <property type="match status" value="1"/>
</dbReference>
<dbReference type="SUPFAM" id="SSF54565">
    <property type="entry name" value="Ribosomal protein S16"/>
    <property type="match status" value="1"/>
</dbReference>
<dbReference type="PROSITE" id="PS00732">
    <property type="entry name" value="RIBOSOMAL_S16"/>
    <property type="match status" value="1"/>
</dbReference>
<reference key="1">
    <citation type="journal article" date="1995" name="Science">
        <title>Whole-genome random sequencing and assembly of Haemophilus influenzae Rd.</title>
        <authorList>
            <person name="Fleischmann R.D."/>
            <person name="Adams M.D."/>
            <person name="White O."/>
            <person name="Clayton R.A."/>
            <person name="Kirkness E.F."/>
            <person name="Kerlavage A.R."/>
            <person name="Bult C.J."/>
            <person name="Tomb J.-F."/>
            <person name="Dougherty B.A."/>
            <person name="Merrick J.M."/>
            <person name="McKenney K."/>
            <person name="Sutton G.G."/>
            <person name="FitzHugh W."/>
            <person name="Fields C.A."/>
            <person name="Gocayne J.D."/>
            <person name="Scott J.D."/>
            <person name="Shirley R."/>
            <person name="Liu L.-I."/>
            <person name="Glodek A."/>
            <person name="Kelley J.M."/>
            <person name="Weidman J.F."/>
            <person name="Phillips C.A."/>
            <person name="Spriggs T."/>
            <person name="Hedblom E."/>
            <person name="Cotton M.D."/>
            <person name="Utterback T.R."/>
            <person name="Hanna M.C."/>
            <person name="Nguyen D.T."/>
            <person name="Saudek D.M."/>
            <person name="Brandon R.C."/>
            <person name="Fine L.D."/>
            <person name="Fritchman J.L."/>
            <person name="Fuhrmann J.L."/>
            <person name="Geoghagen N.S.M."/>
            <person name="Gnehm C.L."/>
            <person name="McDonald L.A."/>
            <person name="Small K.V."/>
            <person name="Fraser C.M."/>
            <person name="Smith H.O."/>
            <person name="Venter J.C."/>
        </authorList>
    </citation>
    <scope>NUCLEOTIDE SEQUENCE [LARGE SCALE GENOMIC DNA]</scope>
    <source>
        <strain>ATCC 51907 / DSM 11121 / KW20 / Rd</strain>
    </source>
</reference>